<name>KTHY_PROM0</name>
<proteinExistence type="inferred from homology"/>
<sequence length="212" mass="23933">MKGKFIVIEGIDGCGKTTQIDELSKWLPISGLLKKESKLITTREPGGSLLGKKLRRLILDNNENNKPSSLAELLLYSADRAEHVSKIILPALNNNDWVISDRFSDSTLAYQGYGRNINLEIIKNIESIVCQGASPDLTFFLEISPEESIFRRKNEIPDRIESEGIRFLERVNEGFKLIAKQKNWKVISASQNIKTISNQIKETLLNNFSNAK</sequence>
<evidence type="ECO:0000255" key="1">
    <source>
        <dbReference type="HAMAP-Rule" id="MF_00165"/>
    </source>
</evidence>
<protein>
    <recommendedName>
        <fullName evidence="1">Thymidylate kinase</fullName>
        <ecNumber evidence="1">2.7.4.9</ecNumber>
    </recommendedName>
    <alternativeName>
        <fullName evidence="1">dTMP kinase</fullName>
    </alternativeName>
</protein>
<keyword id="KW-0067">ATP-binding</keyword>
<keyword id="KW-0418">Kinase</keyword>
<keyword id="KW-0545">Nucleotide biosynthesis</keyword>
<keyword id="KW-0547">Nucleotide-binding</keyword>
<keyword id="KW-1185">Reference proteome</keyword>
<keyword id="KW-0808">Transferase</keyword>
<accession>A3PAJ7</accession>
<organism>
    <name type="scientific">Prochlorococcus marinus (strain MIT 9301)</name>
    <dbReference type="NCBI Taxonomy" id="167546"/>
    <lineage>
        <taxon>Bacteria</taxon>
        <taxon>Bacillati</taxon>
        <taxon>Cyanobacteriota</taxon>
        <taxon>Cyanophyceae</taxon>
        <taxon>Synechococcales</taxon>
        <taxon>Prochlorococcaceae</taxon>
        <taxon>Prochlorococcus</taxon>
    </lineage>
</organism>
<feature type="chain" id="PRO_1000023245" description="Thymidylate kinase">
    <location>
        <begin position="1"/>
        <end position="212"/>
    </location>
</feature>
<feature type="binding site" evidence="1">
    <location>
        <begin position="10"/>
        <end position="17"/>
    </location>
    <ligand>
        <name>ATP</name>
        <dbReference type="ChEBI" id="CHEBI:30616"/>
    </ligand>
</feature>
<reference key="1">
    <citation type="journal article" date="2007" name="PLoS Genet.">
        <title>Patterns and implications of gene gain and loss in the evolution of Prochlorococcus.</title>
        <authorList>
            <person name="Kettler G.C."/>
            <person name="Martiny A.C."/>
            <person name="Huang K."/>
            <person name="Zucker J."/>
            <person name="Coleman M.L."/>
            <person name="Rodrigue S."/>
            <person name="Chen F."/>
            <person name="Lapidus A."/>
            <person name="Ferriera S."/>
            <person name="Johnson J."/>
            <person name="Steglich C."/>
            <person name="Church G.M."/>
            <person name="Richardson P."/>
            <person name="Chisholm S.W."/>
        </authorList>
    </citation>
    <scope>NUCLEOTIDE SEQUENCE [LARGE SCALE GENOMIC DNA]</scope>
    <source>
        <strain>MIT 9301</strain>
    </source>
</reference>
<gene>
    <name evidence="1" type="primary">tmk</name>
    <name type="ordered locus">P9301_01491</name>
</gene>
<comment type="function">
    <text evidence="1">Phosphorylation of dTMP to form dTDP in both de novo and salvage pathways of dTTP synthesis.</text>
</comment>
<comment type="catalytic activity">
    <reaction evidence="1">
        <text>dTMP + ATP = dTDP + ADP</text>
        <dbReference type="Rhea" id="RHEA:13517"/>
        <dbReference type="ChEBI" id="CHEBI:30616"/>
        <dbReference type="ChEBI" id="CHEBI:58369"/>
        <dbReference type="ChEBI" id="CHEBI:63528"/>
        <dbReference type="ChEBI" id="CHEBI:456216"/>
        <dbReference type="EC" id="2.7.4.9"/>
    </reaction>
</comment>
<comment type="similarity">
    <text evidence="1">Belongs to the thymidylate kinase family.</text>
</comment>
<dbReference type="EC" id="2.7.4.9" evidence="1"/>
<dbReference type="EMBL" id="CP000576">
    <property type="protein sequence ID" value="ABO16772.1"/>
    <property type="molecule type" value="Genomic_DNA"/>
</dbReference>
<dbReference type="RefSeq" id="WP_011862175.1">
    <property type="nucleotide sequence ID" value="NC_009091.1"/>
</dbReference>
<dbReference type="SMR" id="A3PAJ7"/>
<dbReference type="STRING" id="167546.P9301_01491"/>
<dbReference type="KEGG" id="pmg:P9301_01491"/>
<dbReference type="eggNOG" id="COG0125">
    <property type="taxonomic scope" value="Bacteria"/>
</dbReference>
<dbReference type="HOGENOM" id="CLU_049131_0_2_3"/>
<dbReference type="OrthoDB" id="9774907at2"/>
<dbReference type="Proteomes" id="UP000001430">
    <property type="component" value="Chromosome"/>
</dbReference>
<dbReference type="GO" id="GO:0005829">
    <property type="term" value="C:cytosol"/>
    <property type="evidence" value="ECO:0007669"/>
    <property type="project" value="TreeGrafter"/>
</dbReference>
<dbReference type="GO" id="GO:0005524">
    <property type="term" value="F:ATP binding"/>
    <property type="evidence" value="ECO:0007669"/>
    <property type="project" value="UniProtKB-UniRule"/>
</dbReference>
<dbReference type="GO" id="GO:0004798">
    <property type="term" value="F:dTMP kinase activity"/>
    <property type="evidence" value="ECO:0007669"/>
    <property type="project" value="UniProtKB-UniRule"/>
</dbReference>
<dbReference type="GO" id="GO:0006233">
    <property type="term" value="P:dTDP biosynthetic process"/>
    <property type="evidence" value="ECO:0007669"/>
    <property type="project" value="InterPro"/>
</dbReference>
<dbReference type="GO" id="GO:0006235">
    <property type="term" value="P:dTTP biosynthetic process"/>
    <property type="evidence" value="ECO:0007669"/>
    <property type="project" value="UniProtKB-UniRule"/>
</dbReference>
<dbReference type="GO" id="GO:0006227">
    <property type="term" value="P:dUDP biosynthetic process"/>
    <property type="evidence" value="ECO:0007669"/>
    <property type="project" value="TreeGrafter"/>
</dbReference>
<dbReference type="CDD" id="cd01672">
    <property type="entry name" value="TMPK"/>
    <property type="match status" value="1"/>
</dbReference>
<dbReference type="FunFam" id="3.40.50.300:FF:000225">
    <property type="entry name" value="Thymidylate kinase"/>
    <property type="match status" value="1"/>
</dbReference>
<dbReference type="Gene3D" id="3.40.50.300">
    <property type="entry name" value="P-loop containing nucleotide triphosphate hydrolases"/>
    <property type="match status" value="1"/>
</dbReference>
<dbReference type="HAMAP" id="MF_00165">
    <property type="entry name" value="Thymidylate_kinase"/>
    <property type="match status" value="1"/>
</dbReference>
<dbReference type="InterPro" id="IPR027417">
    <property type="entry name" value="P-loop_NTPase"/>
</dbReference>
<dbReference type="InterPro" id="IPR039430">
    <property type="entry name" value="Thymidylate_kin-like_dom"/>
</dbReference>
<dbReference type="InterPro" id="IPR018095">
    <property type="entry name" value="Thymidylate_kin_CS"/>
</dbReference>
<dbReference type="InterPro" id="IPR018094">
    <property type="entry name" value="Thymidylate_kinase"/>
</dbReference>
<dbReference type="NCBIfam" id="TIGR00041">
    <property type="entry name" value="DTMP_kinase"/>
    <property type="match status" value="1"/>
</dbReference>
<dbReference type="PANTHER" id="PTHR10344">
    <property type="entry name" value="THYMIDYLATE KINASE"/>
    <property type="match status" value="1"/>
</dbReference>
<dbReference type="PANTHER" id="PTHR10344:SF4">
    <property type="entry name" value="UMP-CMP KINASE 2, MITOCHONDRIAL"/>
    <property type="match status" value="1"/>
</dbReference>
<dbReference type="Pfam" id="PF02223">
    <property type="entry name" value="Thymidylate_kin"/>
    <property type="match status" value="1"/>
</dbReference>
<dbReference type="SUPFAM" id="SSF52540">
    <property type="entry name" value="P-loop containing nucleoside triphosphate hydrolases"/>
    <property type="match status" value="1"/>
</dbReference>
<dbReference type="PROSITE" id="PS01331">
    <property type="entry name" value="THYMIDYLATE_KINASE"/>
    <property type="match status" value="1"/>
</dbReference>